<name>BH013_ARATH</name>
<organism>
    <name type="scientific">Arabidopsis thaliana</name>
    <name type="common">Mouse-ear cress</name>
    <dbReference type="NCBI Taxonomy" id="3702"/>
    <lineage>
        <taxon>Eukaryota</taxon>
        <taxon>Viridiplantae</taxon>
        <taxon>Streptophyta</taxon>
        <taxon>Embryophyta</taxon>
        <taxon>Tracheophyta</taxon>
        <taxon>Spermatophyta</taxon>
        <taxon>Magnoliopsida</taxon>
        <taxon>eudicotyledons</taxon>
        <taxon>Gunneridae</taxon>
        <taxon>Pentapetalae</taxon>
        <taxon>rosids</taxon>
        <taxon>malvids</taxon>
        <taxon>Brassicales</taxon>
        <taxon>Brassicaceae</taxon>
        <taxon>Camelineae</taxon>
        <taxon>Arabidopsis</taxon>
    </lineage>
</organism>
<dbReference type="EMBL" id="AF251698">
    <property type="protein sequence ID" value="AAL55720.1"/>
    <property type="molecule type" value="mRNA"/>
</dbReference>
<dbReference type="EMBL" id="AC023628">
    <property type="protein sequence ID" value="AAF97322.1"/>
    <property type="molecule type" value="Genomic_DNA"/>
</dbReference>
<dbReference type="EMBL" id="CP002684">
    <property type="protein sequence ID" value="AEE27262.1"/>
    <property type="molecule type" value="Genomic_DNA"/>
</dbReference>
<dbReference type="EMBL" id="CP002684">
    <property type="protein sequence ID" value="AEE27263.1"/>
    <property type="molecule type" value="Genomic_DNA"/>
</dbReference>
<dbReference type="EMBL" id="CP002684">
    <property type="protein sequence ID" value="AEE27264.1"/>
    <property type="molecule type" value="Genomic_DNA"/>
</dbReference>
<dbReference type="EMBL" id="AF488559">
    <property type="protein sequence ID" value="AAM10932.1"/>
    <property type="molecule type" value="mRNA"/>
</dbReference>
<dbReference type="EMBL" id="AY079012">
    <property type="protein sequence ID" value="AAL84968.1"/>
    <property type="molecule type" value="mRNA"/>
</dbReference>
<dbReference type="EMBL" id="AY120752">
    <property type="protein sequence ID" value="AAM53310.1"/>
    <property type="molecule type" value="mRNA"/>
</dbReference>
<dbReference type="EMBL" id="BT004517">
    <property type="protein sequence ID" value="AAO42763.1"/>
    <property type="molecule type" value="mRNA"/>
</dbReference>
<dbReference type="PIR" id="H86142">
    <property type="entry name" value="H86142"/>
</dbReference>
<dbReference type="RefSeq" id="NP_001077440.1">
    <property type="nucleotide sequence ID" value="NM_001083971.1"/>
</dbReference>
<dbReference type="RefSeq" id="NP_001184883.1">
    <property type="nucleotide sequence ID" value="NM_001197954.2"/>
</dbReference>
<dbReference type="RefSeq" id="NP_171634.1">
    <property type="nucleotide sequence ID" value="NM_100009.3"/>
</dbReference>
<dbReference type="SMR" id="Q9LNJ5"/>
<dbReference type="BioGRID" id="24780">
    <property type="interactions" value="23"/>
</dbReference>
<dbReference type="FunCoup" id="Q9LNJ5">
    <property type="interactions" value="1452"/>
</dbReference>
<dbReference type="IntAct" id="Q9LNJ5">
    <property type="interactions" value="23"/>
</dbReference>
<dbReference type="STRING" id="3702.Q9LNJ5"/>
<dbReference type="GlyGen" id="Q9LNJ5">
    <property type="glycosylation" value="2 sites, 1 O-linked glycan (2 sites)"/>
</dbReference>
<dbReference type="iPTMnet" id="Q9LNJ5"/>
<dbReference type="PaxDb" id="3702-AT1G01260.1"/>
<dbReference type="ProteomicsDB" id="240347"/>
<dbReference type="EnsemblPlants" id="AT1G01260.1">
    <property type="protein sequence ID" value="AT1G01260.1"/>
    <property type="gene ID" value="AT1G01260"/>
</dbReference>
<dbReference type="EnsemblPlants" id="AT1G01260.2">
    <property type="protein sequence ID" value="AT1G01260.2"/>
    <property type="gene ID" value="AT1G01260"/>
</dbReference>
<dbReference type="EnsemblPlants" id="AT1G01260.3">
    <property type="protein sequence ID" value="AT1G01260.3"/>
    <property type="gene ID" value="AT1G01260"/>
</dbReference>
<dbReference type="GeneID" id="839545"/>
<dbReference type="Gramene" id="AT1G01260.1">
    <property type="protein sequence ID" value="AT1G01260.1"/>
    <property type="gene ID" value="AT1G01260"/>
</dbReference>
<dbReference type="Gramene" id="AT1G01260.2">
    <property type="protein sequence ID" value="AT1G01260.2"/>
    <property type="gene ID" value="AT1G01260"/>
</dbReference>
<dbReference type="Gramene" id="AT1G01260.3">
    <property type="protein sequence ID" value="AT1G01260.3"/>
    <property type="gene ID" value="AT1G01260"/>
</dbReference>
<dbReference type="KEGG" id="ath:AT1G01260"/>
<dbReference type="Araport" id="AT1G01260"/>
<dbReference type="TAIR" id="AT1G01260">
    <property type="gene designation" value="JAM2"/>
</dbReference>
<dbReference type="eggNOG" id="ENOG502QUFW">
    <property type="taxonomic scope" value="Eukaryota"/>
</dbReference>
<dbReference type="HOGENOM" id="CLU_021132_0_1_1"/>
<dbReference type="InParanoid" id="Q9LNJ5"/>
<dbReference type="OMA" id="RFMFSNP"/>
<dbReference type="OrthoDB" id="677168at2759"/>
<dbReference type="PhylomeDB" id="Q9LNJ5"/>
<dbReference type="PRO" id="PR:Q9LNJ5"/>
<dbReference type="Proteomes" id="UP000006548">
    <property type="component" value="Chromosome 1"/>
</dbReference>
<dbReference type="ExpressionAtlas" id="Q9LNJ5">
    <property type="expression patterns" value="baseline and differential"/>
</dbReference>
<dbReference type="GO" id="GO:0005737">
    <property type="term" value="C:cytoplasm"/>
    <property type="evidence" value="ECO:0000314"/>
    <property type="project" value="TAIR"/>
</dbReference>
<dbReference type="GO" id="GO:0005634">
    <property type="term" value="C:nucleus"/>
    <property type="evidence" value="ECO:0000314"/>
    <property type="project" value="TAIR"/>
</dbReference>
<dbReference type="GO" id="GO:0003700">
    <property type="term" value="F:DNA-binding transcription factor activity"/>
    <property type="evidence" value="ECO:0000250"/>
    <property type="project" value="TAIR"/>
</dbReference>
<dbReference type="GO" id="GO:0046983">
    <property type="term" value="F:protein dimerization activity"/>
    <property type="evidence" value="ECO:0007669"/>
    <property type="project" value="InterPro"/>
</dbReference>
<dbReference type="GO" id="GO:0000976">
    <property type="term" value="F:transcription cis-regulatory region binding"/>
    <property type="evidence" value="ECO:0000353"/>
    <property type="project" value="TAIR"/>
</dbReference>
<dbReference type="GO" id="GO:0010629">
    <property type="term" value="P:negative regulation of gene expression"/>
    <property type="evidence" value="ECO:0000316"/>
    <property type="project" value="TAIR"/>
</dbReference>
<dbReference type="GO" id="GO:0006355">
    <property type="term" value="P:regulation of DNA-templated transcription"/>
    <property type="evidence" value="ECO:0000304"/>
    <property type="project" value="TAIR"/>
</dbReference>
<dbReference type="CDD" id="cd11449">
    <property type="entry name" value="bHLH_AtAIB_like"/>
    <property type="match status" value="1"/>
</dbReference>
<dbReference type="FunFam" id="4.10.280.10:FF:000078">
    <property type="entry name" value="Transcription factor bHLH13"/>
    <property type="match status" value="1"/>
</dbReference>
<dbReference type="Gene3D" id="4.10.280.10">
    <property type="entry name" value="Helix-loop-helix DNA-binding domain"/>
    <property type="match status" value="1"/>
</dbReference>
<dbReference type="InterPro" id="IPR045084">
    <property type="entry name" value="AIB/MYC-like"/>
</dbReference>
<dbReference type="InterPro" id="IPR011598">
    <property type="entry name" value="bHLH_dom"/>
</dbReference>
<dbReference type="InterPro" id="IPR036638">
    <property type="entry name" value="HLH_DNA-bd_sf"/>
</dbReference>
<dbReference type="InterPro" id="IPR025610">
    <property type="entry name" value="MYC/MYB_N"/>
</dbReference>
<dbReference type="PANTHER" id="PTHR11514">
    <property type="entry name" value="MYC"/>
    <property type="match status" value="1"/>
</dbReference>
<dbReference type="PANTHER" id="PTHR11514:SF47">
    <property type="entry name" value="TRANSCRIPTION FACTOR BHLH13"/>
    <property type="match status" value="1"/>
</dbReference>
<dbReference type="Pfam" id="PF14215">
    <property type="entry name" value="bHLH-MYC_N"/>
    <property type="match status" value="1"/>
</dbReference>
<dbReference type="Pfam" id="PF00010">
    <property type="entry name" value="HLH"/>
    <property type="match status" value="1"/>
</dbReference>
<dbReference type="SMART" id="SM00353">
    <property type="entry name" value="HLH"/>
    <property type="match status" value="1"/>
</dbReference>
<dbReference type="SUPFAM" id="SSF47459">
    <property type="entry name" value="HLH, helix-loop-helix DNA-binding domain"/>
    <property type="match status" value="1"/>
</dbReference>
<dbReference type="PROSITE" id="PS50888">
    <property type="entry name" value="BHLH"/>
    <property type="match status" value="1"/>
</dbReference>
<accession>Q9LNJ5</accession>
<accession>Q8S3F5</accession>
<reference key="1">
    <citation type="journal article" date="2003" name="Mol. Biol. Evol.">
        <title>The basic helix-loop-helix transcription factor family in plants: a genome-wide study of protein structure and functional diversity.</title>
        <authorList>
            <person name="Heim M.A."/>
            <person name="Jakoby M."/>
            <person name="Werber M."/>
            <person name="Martin C."/>
            <person name="Weisshaar B."/>
            <person name="Bailey P.C."/>
        </authorList>
    </citation>
    <scope>NUCLEOTIDE SEQUENCE [MRNA]</scope>
    <scope>INDUCTION BY UV LIGHT</scope>
    <scope>GENE FAMILY</scope>
    <scope>NOMENCLATURE</scope>
    <source>
        <strain>cv. Columbia</strain>
        <tissue>Root</tissue>
    </source>
</reference>
<reference key="2">
    <citation type="journal article" date="2000" name="Nature">
        <title>Sequence and analysis of chromosome 1 of the plant Arabidopsis thaliana.</title>
        <authorList>
            <person name="Theologis A."/>
            <person name="Ecker J.R."/>
            <person name="Palm C.J."/>
            <person name="Federspiel N.A."/>
            <person name="Kaul S."/>
            <person name="White O."/>
            <person name="Alonso J."/>
            <person name="Altafi H."/>
            <person name="Araujo R."/>
            <person name="Bowman C.L."/>
            <person name="Brooks S.Y."/>
            <person name="Buehler E."/>
            <person name="Chan A."/>
            <person name="Chao Q."/>
            <person name="Chen H."/>
            <person name="Cheuk R.F."/>
            <person name="Chin C.W."/>
            <person name="Chung M.K."/>
            <person name="Conn L."/>
            <person name="Conway A.B."/>
            <person name="Conway A.R."/>
            <person name="Creasy T.H."/>
            <person name="Dewar K."/>
            <person name="Dunn P."/>
            <person name="Etgu P."/>
            <person name="Feldblyum T.V."/>
            <person name="Feng J.-D."/>
            <person name="Fong B."/>
            <person name="Fujii C.Y."/>
            <person name="Gill J.E."/>
            <person name="Goldsmith A.D."/>
            <person name="Haas B."/>
            <person name="Hansen N.F."/>
            <person name="Hughes B."/>
            <person name="Huizar L."/>
            <person name="Hunter J.L."/>
            <person name="Jenkins J."/>
            <person name="Johnson-Hopson C."/>
            <person name="Khan S."/>
            <person name="Khaykin E."/>
            <person name="Kim C.J."/>
            <person name="Koo H.L."/>
            <person name="Kremenetskaia I."/>
            <person name="Kurtz D.B."/>
            <person name="Kwan A."/>
            <person name="Lam B."/>
            <person name="Langin-Hooper S."/>
            <person name="Lee A."/>
            <person name="Lee J.M."/>
            <person name="Lenz C.A."/>
            <person name="Li J.H."/>
            <person name="Li Y.-P."/>
            <person name="Lin X."/>
            <person name="Liu S.X."/>
            <person name="Liu Z.A."/>
            <person name="Luros J.S."/>
            <person name="Maiti R."/>
            <person name="Marziali A."/>
            <person name="Militscher J."/>
            <person name="Miranda M."/>
            <person name="Nguyen M."/>
            <person name="Nierman W.C."/>
            <person name="Osborne B.I."/>
            <person name="Pai G."/>
            <person name="Peterson J."/>
            <person name="Pham P.K."/>
            <person name="Rizzo M."/>
            <person name="Rooney T."/>
            <person name="Rowley D."/>
            <person name="Sakano H."/>
            <person name="Salzberg S.L."/>
            <person name="Schwartz J.R."/>
            <person name="Shinn P."/>
            <person name="Southwick A.M."/>
            <person name="Sun H."/>
            <person name="Tallon L.J."/>
            <person name="Tambunga G."/>
            <person name="Toriumi M.J."/>
            <person name="Town C.D."/>
            <person name="Utterback T."/>
            <person name="Van Aken S."/>
            <person name="Vaysberg M."/>
            <person name="Vysotskaia V.S."/>
            <person name="Walker M."/>
            <person name="Wu D."/>
            <person name="Yu G."/>
            <person name="Fraser C.M."/>
            <person name="Venter J.C."/>
            <person name="Davis R.W."/>
        </authorList>
    </citation>
    <scope>NUCLEOTIDE SEQUENCE [LARGE SCALE GENOMIC DNA]</scope>
    <source>
        <strain>cv. Columbia</strain>
    </source>
</reference>
<reference key="3">
    <citation type="journal article" date="2017" name="Plant J.">
        <title>Araport11: a complete reannotation of the Arabidopsis thaliana reference genome.</title>
        <authorList>
            <person name="Cheng C.Y."/>
            <person name="Krishnakumar V."/>
            <person name="Chan A.P."/>
            <person name="Thibaud-Nissen F."/>
            <person name="Schobel S."/>
            <person name="Town C.D."/>
        </authorList>
    </citation>
    <scope>GENOME REANNOTATION</scope>
    <source>
        <strain>cv. Columbia</strain>
    </source>
</reference>
<reference key="4">
    <citation type="journal article" date="2003" name="Science">
        <title>Empirical analysis of transcriptional activity in the Arabidopsis genome.</title>
        <authorList>
            <person name="Yamada K."/>
            <person name="Lim J."/>
            <person name="Dale J.M."/>
            <person name="Chen H."/>
            <person name="Shinn P."/>
            <person name="Palm C.J."/>
            <person name="Southwick A.M."/>
            <person name="Wu H.C."/>
            <person name="Kim C.J."/>
            <person name="Nguyen M."/>
            <person name="Pham P.K."/>
            <person name="Cheuk R.F."/>
            <person name="Karlin-Newmann G."/>
            <person name="Liu S.X."/>
            <person name="Lam B."/>
            <person name="Sakano H."/>
            <person name="Wu T."/>
            <person name="Yu G."/>
            <person name="Miranda M."/>
            <person name="Quach H.L."/>
            <person name="Tripp M."/>
            <person name="Chang C.H."/>
            <person name="Lee J.M."/>
            <person name="Toriumi M.J."/>
            <person name="Chan M.M."/>
            <person name="Tang C.C."/>
            <person name="Onodera C.S."/>
            <person name="Deng J.M."/>
            <person name="Akiyama K."/>
            <person name="Ansari Y."/>
            <person name="Arakawa T."/>
            <person name="Banh J."/>
            <person name="Banno F."/>
            <person name="Bowser L."/>
            <person name="Brooks S.Y."/>
            <person name="Carninci P."/>
            <person name="Chao Q."/>
            <person name="Choy N."/>
            <person name="Enju A."/>
            <person name="Goldsmith A.D."/>
            <person name="Gurjal M."/>
            <person name="Hansen N.F."/>
            <person name="Hayashizaki Y."/>
            <person name="Johnson-Hopson C."/>
            <person name="Hsuan V.W."/>
            <person name="Iida K."/>
            <person name="Karnes M."/>
            <person name="Khan S."/>
            <person name="Koesema E."/>
            <person name="Ishida J."/>
            <person name="Jiang P.X."/>
            <person name="Jones T."/>
            <person name="Kawai J."/>
            <person name="Kamiya A."/>
            <person name="Meyers C."/>
            <person name="Nakajima M."/>
            <person name="Narusaka M."/>
            <person name="Seki M."/>
            <person name="Sakurai T."/>
            <person name="Satou M."/>
            <person name="Tamse R."/>
            <person name="Vaysberg M."/>
            <person name="Wallender E.K."/>
            <person name="Wong C."/>
            <person name="Yamamura Y."/>
            <person name="Yuan S."/>
            <person name="Shinozaki K."/>
            <person name="Davis R.W."/>
            <person name="Theologis A."/>
            <person name="Ecker J.R."/>
        </authorList>
    </citation>
    <scope>NUCLEOTIDE SEQUENCE [LARGE SCALE MRNA]</scope>
    <source>
        <strain>cv. Columbia</strain>
    </source>
</reference>
<reference key="5">
    <citation type="journal article" date="2003" name="Plant Cell">
        <title>The Arabidopsis basic/helix-loop-helix transcription factor family.</title>
        <authorList>
            <person name="Toledo-Ortiz G."/>
            <person name="Huq E."/>
            <person name="Quail P.H."/>
        </authorList>
    </citation>
    <scope>GENE FAMILY</scope>
</reference>
<reference key="6">
    <citation type="journal article" date="2003" name="Plant Cell">
        <title>Update on the basic helix-loop-helix transcription factor gene family in Arabidopsis thaliana.</title>
        <authorList>
            <person name="Bailey P.C."/>
            <person name="Martin C."/>
            <person name="Toledo-Ortiz G."/>
            <person name="Quail P.H."/>
            <person name="Huq E."/>
            <person name="Heim M.A."/>
            <person name="Jakoby M."/>
            <person name="Werber M."/>
            <person name="Weisshaar B."/>
        </authorList>
    </citation>
    <scope>GENE FAMILY</scope>
    <scope>NOMENCLATURE</scope>
</reference>
<sequence>MNIGRLVWNEDDKAIVASLLGKRALDYLLSNSVSNANLLMTLGSDENLQNKLSDLVERPNASNFSWNYAIFWQISRSKAGDLVLCWGDGYCREPKEGEKSEIVRILSMGREEETHQTMRKRVLQKLHDLFGGSEEENCALGLDRVTDTEMFLLSSMYFSFPRGEGGPGKCFASAKPVWLSDVVNSGSDYCVRSFLAKSAGIQTVVLVPTDLGVVELGSTSCLPESEDSILSIRSLFTSSLPPVRAVALPVTVAEKIDDNRTKIFGKDLHNSGFLQHHQHHQQQQQQPPQQQQHRQFREKLTVRKMDDRAPKRLDAYPNNGNRFMFSNPGTNNNTLLSPTWVQPENYTRPINVKEVPSTDEFKFLPLQQSSQRLLPPAQMQIDFSAASSRASENNSDGEGGGEWADAVGADESGNNRPRKRGRRPANGRAEALNHVEAERQRREKLNQRFYALRSVVPNISKMDKASLLGDAVSYINELHAKLKVMEAERERLGYSSNPPISLDSDINVQTSGEDVTVRINCPLESHPASRIFHAFEESKVEVINSNLEVSQDTVLHTFVVKSEELTKEKLISALSREQTNSVQSRTSSGR</sequence>
<evidence type="ECO:0000255" key="1">
    <source>
        <dbReference type="PROSITE-ProRule" id="PRU00981"/>
    </source>
</evidence>
<evidence type="ECO:0000256" key="2">
    <source>
        <dbReference type="SAM" id="MobiDB-lite"/>
    </source>
</evidence>
<evidence type="ECO:0000269" key="3">
    <source>
    </source>
</evidence>
<evidence type="ECO:0000305" key="4"/>
<gene>
    <name type="primary">BHLH13</name>
    <name type="synonym">EN39</name>
    <name type="ordered locus">At1g01260</name>
    <name type="ORF">F6F3.7</name>
</gene>
<comment type="subunit">
    <text evidence="4">Homodimer.</text>
</comment>
<comment type="interaction">
    <interactant intactId="EBI-4434261">
        <id>Q9LNJ5</id>
    </interactant>
    <interactant intactId="EBI-15192535">
        <id>F4JI72</id>
        <label>At4g03250</label>
    </interactant>
    <organismsDiffer>false</organismsDiffer>
    <experiments>4</experiments>
</comment>
<comment type="interaction">
    <interactant intactId="EBI-4434261">
        <id>Q9LNJ5</id>
    </interactant>
    <interactant intactId="EBI-15196271">
        <id>O23487</id>
        <label>BHLH3</label>
    </interactant>
    <organismsDiffer>false</organismsDiffer>
    <experiments>3</experiments>
</comment>
<comment type="interaction">
    <interactant intactId="EBI-4434261">
        <id>Q9LNJ5</id>
    </interactant>
    <interactant intactId="EBI-4435064">
        <id>Q8H1G0</id>
        <label>GATA28</label>
    </interactant>
    <organismsDiffer>false</organismsDiffer>
    <experiments>6</experiments>
</comment>
<comment type="interaction">
    <interactant intactId="EBI-4434261">
        <id>Q9LNJ5</id>
    </interactant>
    <interactant intactId="EBI-4425826">
        <id>Q8LA53</id>
        <label>MBD2</label>
    </interactant>
    <organismsDiffer>false</organismsDiffer>
    <experiments>3</experiments>
</comment>
<comment type="interaction">
    <interactant intactId="EBI-4434261">
        <id>Q9LNJ5</id>
    </interactant>
    <interactant intactId="EBI-541107">
        <id>Q9LUA3</id>
        <label>NIMIN-2</label>
    </interactant>
    <organismsDiffer>false</organismsDiffer>
    <experiments>3</experiments>
</comment>
<comment type="interaction">
    <interactant intactId="EBI-4434261">
        <id>Q9LNJ5</id>
    </interactant>
    <interactant intactId="EBI-1388539">
        <id>Q9LMA8</id>
        <label>TIFY10A</label>
    </interactant>
    <organismsDiffer>false</organismsDiffer>
    <experiments>9</experiments>
</comment>
<comment type="interaction">
    <interactant intactId="EBI-4434261">
        <id>Q9LNJ5</id>
    </interactant>
    <interactant intactId="EBI-1792563">
        <id>Q9S7M2</id>
        <label>TIFY10B</label>
    </interactant>
    <organismsDiffer>false</organismsDiffer>
    <experiments>6</experiments>
</comment>
<comment type="interaction">
    <interactant intactId="EBI-4434261">
        <id>Q9LNJ5</id>
    </interactant>
    <interactant intactId="EBI-2312095">
        <id>Q9LDU5</id>
        <label>TIFY11A</label>
    </interactant>
    <organismsDiffer>false</organismsDiffer>
    <experiments>6</experiments>
</comment>
<comment type="interaction">
    <interactant intactId="EBI-4434261">
        <id>Q9LNJ5</id>
    </interactant>
    <interactant intactId="EBI-2312120">
        <id>Q9C9E3</id>
        <label>TIFY11B</label>
    </interactant>
    <organismsDiffer>false</organismsDiffer>
    <experiments>5</experiments>
</comment>
<comment type="interaction">
    <interactant intactId="EBI-4434261">
        <id>Q9LNJ5</id>
    </interactant>
    <interactant intactId="EBI-2312209">
        <id>Q9M246</id>
        <label>TIFY3A</label>
    </interactant>
    <organismsDiffer>false</organismsDiffer>
    <experiments>5</experiments>
</comment>
<comment type="interaction">
    <interactant intactId="EBI-4434261">
        <id>Q9LNJ5</id>
    </interactant>
    <interactant intactId="EBI-2312231">
        <id>Q9C5K8</id>
        <label>TIFY3B</label>
    </interactant>
    <organismsDiffer>false</organismsDiffer>
    <experiments>7</experiments>
</comment>
<comment type="interaction">
    <interactant intactId="EBI-4434261">
        <id>Q9LNJ5</id>
    </interactant>
    <interactant intactId="EBI-2312143">
        <id>Q8LBM2</id>
        <label>TIFY5A</label>
    </interactant>
    <organismsDiffer>false</organismsDiffer>
    <experiments>7</experiments>
</comment>
<comment type="interaction">
    <interactant intactId="EBI-4434261">
        <id>Q9LNJ5</id>
    </interactant>
    <interactant intactId="EBI-2312053">
        <id>Q58G47</id>
        <label>TIFY6A</label>
    </interactant>
    <organismsDiffer>false</organismsDiffer>
    <experiments>4</experiments>
</comment>
<comment type="interaction">
    <interactant intactId="EBI-4434261">
        <id>Q9LNJ5</id>
    </interactant>
    <interactant intactId="EBI-1792431">
        <id>Q9LVI4</id>
        <label>TIFY6B</label>
    </interactant>
    <organismsDiffer>false</organismsDiffer>
    <experiments>5</experiments>
</comment>
<comment type="interaction">
    <interactant intactId="EBI-4434261">
        <id>Q9LNJ5</id>
    </interactant>
    <interactant intactId="EBI-1792583">
        <id>Q8W4J8</id>
        <label>TIFY7</label>
    </interactant>
    <organismsDiffer>false</organismsDiffer>
    <experiments>5</experiments>
</comment>
<comment type="interaction">
    <interactant intactId="EBI-4434261">
        <id>Q9LNJ5</id>
    </interactant>
    <interactant intactId="EBI-2312172">
        <id>Q93ZM9</id>
        <label>TIFY9</label>
    </interactant>
    <organismsDiffer>false</organismsDiffer>
    <experiments>4</experiments>
</comment>
<comment type="interaction">
    <interactant intactId="EBI-4434261">
        <id>Q9LNJ5</id>
    </interactant>
    <interactant intactId="EBI-1115523">
        <id>Q9LDT3</id>
        <label>YAB4</label>
    </interactant>
    <organismsDiffer>false</organismsDiffer>
    <experiments>5</experiments>
</comment>
<comment type="subcellular location">
    <subcellularLocation>
        <location evidence="1">Nucleus</location>
    </subcellularLocation>
</comment>
<comment type="induction">
    <text evidence="3">By UV treatment.</text>
</comment>
<protein>
    <recommendedName>
        <fullName>Transcription factor bHLH13</fullName>
    </recommendedName>
    <alternativeName>
        <fullName>Basic helix-loop-helix protein 13</fullName>
        <shortName>AtbHLH13</shortName>
        <shortName>bHLH 13</shortName>
    </alternativeName>
    <alternativeName>
        <fullName>Transcription factor EN 39</fullName>
    </alternativeName>
    <alternativeName>
        <fullName>bHLH transcription factor bHLH013</fullName>
    </alternativeName>
</protein>
<keyword id="KW-0238">DNA-binding</keyword>
<keyword id="KW-0539">Nucleus</keyword>
<keyword id="KW-1185">Reference proteome</keyword>
<keyword id="KW-0804">Transcription</keyword>
<keyword id="KW-0805">Transcription regulation</keyword>
<feature type="chain" id="PRO_0000358730" description="Transcription factor bHLH13">
    <location>
        <begin position="1"/>
        <end position="590"/>
    </location>
</feature>
<feature type="domain" description="bHLH" evidence="1">
    <location>
        <begin position="429"/>
        <end position="478"/>
    </location>
</feature>
<feature type="region of interest" description="Disordered" evidence="2">
    <location>
        <begin position="274"/>
        <end position="296"/>
    </location>
</feature>
<feature type="region of interest" description="Disordered" evidence="2">
    <location>
        <begin position="385"/>
        <end position="439"/>
    </location>
</feature>
<feature type="compositionally biased region" description="Low complexity" evidence="2">
    <location>
        <begin position="281"/>
        <end position="293"/>
    </location>
</feature>
<feature type="compositionally biased region" description="Basic residues" evidence="2">
    <location>
        <begin position="416"/>
        <end position="425"/>
    </location>
</feature>
<feature type="sequence conflict" description="In Ref. 1; AAM10932." evidence="4" ref="1">
    <original>E</original>
    <variation>K</variation>
    <location>
        <position position="134"/>
    </location>
</feature>
<proteinExistence type="evidence at protein level"/>